<accession>Q12100</accession>
<accession>D6VRW6</accession>
<dbReference type="EC" id="2.7.11.1"/>
<dbReference type="EMBL" id="Z74073">
    <property type="protein sequence ID" value="CAA98584.1"/>
    <property type="molecule type" value="Genomic_DNA"/>
</dbReference>
<dbReference type="EMBL" id="Z48432">
    <property type="protein sequence ID" value="CAA88334.1"/>
    <property type="molecule type" value="Genomic_DNA"/>
</dbReference>
<dbReference type="EMBL" id="AY692716">
    <property type="protein sequence ID" value="AAT92735.1"/>
    <property type="molecule type" value="Genomic_DNA"/>
</dbReference>
<dbReference type="EMBL" id="BK006938">
    <property type="protein sequence ID" value="DAA11826.1"/>
    <property type="molecule type" value="Genomic_DNA"/>
</dbReference>
<dbReference type="PIR" id="S52494">
    <property type="entry name" value="S52494"/>
</dbReference>
<dbReference type="RefSeq" id="NP_010259.1">
    <property type="nucleotide sequence ID" value="NM_001180084.1"/>
</dbReference>
<dbReference type="SMR" id="Q12100"/>
<dbReference type="BioGRID" id="32030">
    <property type="interactions" value="152"/>
</dbReference>
<dbReference type="DIP" id="DIP-6483N"/>
<dbReference type="FunCoup" id="Q12100">
    <property type="interactions" value="317"/>
</dbReference>
<dbReference type="IntAct" id="Q12100">
    <property type="interactions" value="32"/>
</dbReference>
<dbReference type="MINT" id="Q12100"/>
<dbReference type="STRING" id="4932.YDL025C"/>
<dbReference type="GlyGen" id="Q12100">
    <property type="glycosylation" value="7 sites, 1 O-linked glycan (4 sites)"/>
</dbReference>
<dbReference type="iPTMnet" id="Q12100"/>
<dbReference type="PaxDb" id="4932-YDL025C"/>
<dbReference type="PeptideAtlas" id="Q12100"/>
<dbReference type="EnsemblFungi" id="YDL025C_mRNA">
    <property type="protein sequence ID" value="YDL025C"/>
    <property type="gene ID" value="YDL025C"/>
</dbReference>
<dbReference type="GeneID" id="851536"/>
<dbReference type="KEGG" id="sce:YDL025C"/>
<dbReference type="AGR" id="SGD:S000002183"/>
<dbReference type="SGD" id="S000002183">
    <property type="gene designation" value="RTK1"/>
</dbReference>
<dbReference type="VEuPathDB" id="FungiDB:YDL025C"/>
<dbReference type="eggNOG" id="KOG0590">
    <property type="taxonomic scope" value="Eukaryota"/>
</dbReference>
<dbReference type="HOGENOM" id="CLU_000288_82_3_1"/>
<dbReference type="InParanoid" id="Q12100"/>
<dbReference type="OMA" id="EIACYFK"/>
<dbReference type="OrthoDB" id="6513151at2759"/>
<dbReference type="BioCyc" id="YEAST:G3O-29452-MONOMER"/>
<dbReference type="BioGRID-ORCS" id="851536">
    <property type="hits" value="0 hits in 13 CRISPR screens"/>
</dbReference>
<dbReference type="PRO" id="PR:Q12100"/>
<dbReference type="Proteomes" id="UP000002311">
    <property type="component" value="Chromosome IV"/>
</dbReference>
<dbReference type="RNAct" id="Q12100">
    <property type="molecule type" value="protein"/>
</dbReference>
<dbReference type="GO" id="GO:0071944">
    <property type="term" value="C:cell periphery"/>
    <property type="evidence" value="ECO:0000314"/>
    <property type="project" value="SGD"/>
</dbReference>
<dbReference type="GO" id="GO:0005935">
    <property type="term" value="C:cellular bud neck"/>
    <property type="evidence" value="ECO:0000314"/>
    <property type="project" value="SGD"/>
</dbReference>
<dbReference type="GO" id="GO:0005524">
    <property type="term" value="F:ATP binding"/>
    <property type="evidence" value="ECO:0007669"/>
    <property type="project" value="UniProtKB-KW"/>
</dbReference>
<dbReference type="GO" id="GO:0106310">
    <property type="term" value="F:protein serine kinase activity"/>
    <property type="evidence" value="ECO:0007669"/>
    <property type="project" value="RHEA"/>
</dbReference>
<dbReference type="GO" id="GO:0004674">
    <property type="term" value="F:protein serine/threonine kinase activity"/>
    <property type="evidence" value="ECO:0000250"/>
    <property type="project" value="SGD"/>
</dbReference>
<dbReference type="CDD" id="cd13994">
    <property type="entry name" value="STKc_HAL4_like"/>
    <property type="match status" value="1"/>
</dbReference>
<dbReference type="FunFam" id="1.10.510.10:FF:000955">
    <property type="entry name" value="YDL025C-like protein"/>
    <property type="match status" value="1"/>
</dbReference>
<dbReference type="Gene3D" id="1.10.510.10">
    <property type="entry name" value="Transferase(Phosphotransferase) domain 1"/>
    <property type="match status" value="1"/>
</dbReference>
<dbReference type="InterPro" id="IPR011009">
    <property type="entry name" value="Kinase-like_dom_sf"/>
</dbReference>
<dbReference type="InterPro" id="IPR000719">
    <property type="entry name" value="Prot_kinase_dom"/>
</dbReference>
<dbReference type="InterPro" id="IPR017441">
    <property type="entry name" value="Protein_kinase_ATP_BS"/>
</dbReference>
<dbReference type="InterPro" id="IPR008271">
    <property type="entry name" value="Ser/Thr_kinase_AS"/>
</dbReference>
<dbReference type="PANTHER" id="PTHR24343">
    <property type="entry name" value="SERINE/THREONINE KINASE"/>
    <property type="match status" value="1"/>
</dbReference>
<dbReference type="PANTHER" id="PTHR24343:SF515">
    <property type="entry name" value="SERINE_THREONINE-PROTEIN KINASE RTK1-RELATED"/>
    <property type="match status" value="1"/>
</dbReference>
<dbReference type="Pfam" id="PF00069">
    <property type="entry name" value="Pkinase"/>
    <property type="match status" value="1"/>
</dbReference>
<dbReference type="SMART" id="SM00220">
    <property type="entry name" value="S_TKc"/>
    <property type="match status" value="1"/>
</dbReference>
<dbReference type="SUPFAM" id="SSF56112">
    <property type="entry name" value="Protein kinase-like (PK-like)"/>
    <property type="match status" value="1"/>
</dbReference>
<dbReference type="PROSITE" id="PS00107">
    <property type="entry name" value="PROTEIN_KINASE_ATP"/>
    <property type="match status" value="1"/>
</dbReference>
<dbReference type="PROSITE" id="PS50011">
    <property type="entry name" value="PROTEIN_KINASE_DOM"/>
    <property type="match status" value="1"/>
</dbReference>
<dbReference type="PROSITE" id="PS00108">
    <property type="entry name" value="PROTEIN_KINASE_ST"/>
    <property type="match status" value="1"/>
</dbReference>
<feature type="chain" id="PRO_0000248408" description="Probable serine/threonine-protein kinase RTK1">
    <location>
        <begin position="1"/>
        <end position="620"/>
    </location>
</feature>
<feature type="domain" description="Protein kinase" evidence="1">
    <location>
        <begin position="302"/>
        <end position="575"/>
    </location>
</feature>
<feature type="region of interest" description="Disordered" evidence="3">
    <location>
        <begin position="1"/>
        <end position="20"/>
    </location>
</feature>
<feature type="region of interest" description="Disordered" evidence="3">
    <location>
        <begin position="29"/>
        <end position="130"/>
    </location>
</feature>
<feature type="region of interest" description="Disordered" evidence="3">
    <location>
        <begin position="153"/>
        <end position="186"/>
    </location>
</feature>
<feature type="region of interest" description="Disordered" evidence="3">
    <location>
        <begin position="210"/>
        <end position="237"/>
    </location>
</feature>
<feature type="region of interest" description="Disordered" evidence="3">
    <location>
        <begin position="252"/>
        <end position="271"/>
    </location>
</feature>
<feature type="compositionally biased region" description="Low complexity" evidence="3">
    <location>
        <begin position="7"/>
        <end position="18"/>
    </location>
</feature>
<feature type="compositionally biased region" description="Basic and acidic residues" evidence="3">
    <location>
        <begin position="56"/>
        <end position="76"/>
    </location>
</feature>
<feature type="compositionally biased region" description="Polar residues" evidence="3">
    <location>
        <begin position="95"/>
        <end position="107"/>
    </location>
</feature>
<feature type="compositionally biased region" description="Polar residues" evidence="3">
    <location>
        <begin position="165"/>
        <end position="186"/>
    </location>
</feature>
<feature type="compositionally biased region" description="Polar residues" evidence="3">
    <location>
        <begin position="210"/>
        <end position="222"/>
    </location>
</feature>
<feature type="compositionally biased region" description="Basic residues" evidence="3">
    <location>
        <begin position="254"/>
        <end position="263"/>
    </location>
</feature>
<feature type="active site" description="Proton acceptor" evidence="1 2">
    <location>
        <position position="430"/>
    </location>
</feature>
<feature type="binding site" evidence="1">
    <location>
        <begin position="308"/>
        <end position="316"/>
    </location>
    <ligand>
        <name>ATP</name>
        <dbReference type="ChEBI" id="CHEBI:30616"/>
    </ligand>
</feature>
<feature type="binding site" evidence="1">
    <location>
        <position position="330"/>
    </location>
    <ligand>
        <name>ATP</name>
        <dbReference type="ChEBI" id="CHEBI:30616"/>
    </ligand>
</feature>
<feature type="modified residue" description="Phosphothreonine" evidence="7">
    <location>
        <position position="58"/>
    </location>
</feature>
<feature type="modified residue" description="Phosphoserine" evidence="7">
    <location>
        <position position="60"/>
    </location>
</feature>
<feature type="modified residue" description="Phosphoserine" evidence="7">
    <location>
        <position position="216"/>
    </location>
</feature>
<feature type="cross-link" description="Glycyl lysine isopeptide (Lys-Gly) (interchain with G-Cter in ubiquitin)" evidence="8">
    <location>
        <position position="334"/>
    </location>
</feature>
<proteinExistence type="evidence at protein level"/>
<reference key="1">
    <citation type="journal article" date="1997" name="Nature">
        <title>The nucleotide sequence of Saccharomyces cerevisiae chromosome IV.</title>
        <authorList>
            <person name="Jacq C."/>
            <person name="Alt-Moerbe J."/>
            <person name="Andre B."/>
            <person name="Arnold W."/>
            <person name="Bahr A."/>
            <person name="Ballesta J.P.G."/>
            <person name="Bargues M."/>
            <person name="Baron L."/>
            <person name="Becker A."/>
            <person name="Biteau N."/>
            <person name="Bloecker H."/>
            <person name="Blugeon C."/>
            <person name="Boskovic J."/>
            <person name="Brandt P."/>
            <person name="Brueckner M."/>
            <person name="Buitrago M.J."/>
            <person name="Coster F."/>
            <person name="Delaveau T."/>
            <person name="del Rey F."/>
            <person name="Dujon B."/>
            <person name="Eide L.G."/>
            <person name="Garcia-Cantalejo J.M."/>
            <person name="Goffeau A."/>
            <person name="Gomez-Peris A."/>
            <person name="Granotier C."/>
            <person name="Hanemann V."/>
            <person name="Hankeln T."/>
            <person name="Hoheisel J.D."/>
            <person name="Jaeger W."/>
            <person name="Jimenez A."/>
            <person name="Jonniaux J.-L."/>
            <person name="Kraemer C."/>
            <person name="Kuester H."/>
            <person name="Laamanen P."/>
            <person name="Legros Y."/>
            <person name="Louis E.J."/>
            <person name="Moeller-Rieker S."/>
            <person name="Monnet A."/>
            <person name="Moro M."/>
            <person name="Mueller-Auer S."/>
            <person name="Nussbaumer B."/>
            <person name="Paricio N."/>
            <person name="Paulin L."/>
            <person name="Perea J."/>
            <person name="Perez-Alonso M."/>
            <person name="Perez-Ortin J.E."/>
            <person name="Pohl T.M."/>
            <person name="Prydz H."/>
            <person name="Purnelle B."/>
            <person name="Rasmussen S.W."/>
            <person name="Remacha M.A."/>
            <person name="Revuelta J.L."/>
            <person name="Rieger M."/>
            <person name="Salom D."/>
            <person name="Saluz H.P."/>
            <person name="Saiz J.E."/>
            <person name="Saren A.-M."/>
            <person name="Schaefer M."/>
            <person name="Scharfe M."/>
            <person name="Schmidt E.R."/>
            <person name="Schneider C."/>
            <person name="Scholler P."/>
            <person name="Schwarz S."/>
            <person name="Soler-Mira A."/>
            <person name="Urrestarazu L.A."/>
            <person name="Verhasselt P."/>
            <person name="Vissers S."/>
            <person name="Voet M."/>
            <person name="Volckaert G."/>
            <person name="Wagner G."/>
            <person name="Wambutt R."/>
            <person name="Wedler E."/>
            <person name="Wedler H."/>
            <person name="Woelfl S."/>
            <person name="Harris D.E."/>
            <person name="Bowman S."/>
            <person name="Brown D."/>
            <person name="Churcher C.M."/>
            <person name="Connor R."/>
            <person name="Dedman K."/>
            <person name="Gentles S."/>
            <person name="Hamlin N."/>
            <person name="Hunt S."/>
            <person name="Jones L."/>
            <person name="McDonald S."/>
            <person name="Murphy L.D."/>
            <person name="Niblett D."/>
            <person name="Odell C."/>
            <person name="Oliver K."/>
            <person name="Rajandream M.A."/>
            <person name="Richards C."/>
            <person name="Shore L."/>
            <person name="Walsh S.V."/>
            <person name="Barrell B.G."/>
            <person name="Dietrich F.S."/>
            <person name="Mulligan J.T."/>
            <person name="Allen E."/>
            <person name="Araujo R."/>
            <person name="Aviles E."/>
            <person name="Berno A."/>
            <person name="Carpenter J."/>
            <person name="Chen E."/>
            <person name="Cherry J.M."/>
            <person name="Chung E."/>
            <person name="Duncan M."/>
            <person name="Hunicke-Smith S."/>
            <person name="Hyman R.W."/>
            <person name="Komp C."/>
            <person name="Lashkari D."/>
            <person name="Lew H."/>
            <person name="Lin D."/>
            <person name="Mosedale D."/>
            <person name="Nakahara K."/>
            <person name="Namath A."/>
            <person name="Oefner P."/>
            <person name="Oh C."/>
            <person name="Petel F.X."/>
            <person name="Roberts D."/>
            <person name="Schramm S."/>
            <person name="Schroeder M."/>
            <person name="Shogren T."/>
            <person name="Shroff N."/>
            <person name="Winant A."/>
            <person name="Yelton M.A."/>
            <person name="Botstein D."/>
            <person name="Davis R.W."/>
            <person name="Johnston M."/>
            <person name="Andrews S."/>
            <person name="Brinkman R."/>
            <person name="Cooper J."/>
            <person name="Ding H."/>
            <person name="Du Z."/>
            <person name="Favello A."/>
            <person name="Fulton L."/>
            <person name="Gattung S."/>
            <person name="Greco T."/>
            <person name="Hallsworth K."/>
            <person name="Hawkins J."/>
            <person name="Hillier L.W."/>
            <person name="Jier M."/>
            <person name="Johnson D."/>
            <person name="Johnston L."/>
            <person name="Kirsten J."/>
            <person name="Kucaba T."/>
            <person name="Langston Y."/>
            <person name="Latreille P."/>
            <person name="Le T."/>
            <person name="Mardis E."/>
            <person name="Menezes S."/>
            <person name="Miller N."/>
            <person name="Nhan M."/>
            <person name="Pauley A."/>
            <person name="Peluso D."/>
            <person name="Rifkin L."/>
            <person name="Riles L."/>
            <person name="Taich A."/>
            <person name="Trevaskis E."/>
            <person name="Vignati D."/>
            <person name="Wilcox L."/>
            <person name="Wohldman P."/>
            <person name="Vaudin M."/>
            <person name="Wilson R."/>
            <person name="Waterston R."/>
            <person name="Albermann K."/>
            <person name="Hani J."/>
            <person name="Heumann K."/>
            <person name="Kleine K."/>
            <person name="Mewes H.-W."/>
            <person name="Zollner A."/>
            <person name="Zaccaria P."/>
        </authorList>
    </citation>
    <scope>NUCLEOTIDE SEQUENCE [LARGE SCALE GENOMIC DNA]</scope>
    <source>
        <strain>ATCC 204508 / S288c</strain>
    </source>
</reference>
<reference key="2">
    <citation type="journal article" date="2014" name="G3 (Bethesda)">
        <title>The reference genome sequence of Saccharomyces cerevisiae: Then and now.</title>
        <authorList>
            <person name="Engel S.R."/>
            <person name="Dietrich F.S."/>
            <person name="Fisk D.G."/>
            <person name="Binkley G."/>
            <person name="Balakrishnan R."/>
            <person name="Costanzo M.C."/>
            <person name="Dwight S.S."/>
            <person name="Hitz B.C."/>
            <person name="Karra K."/>
            <person name="Nash R.S."/>
            <person name="Weng S."/>
            <person name="Wong E.D."/>
            <person name="Lloyd P."/>
            <person name="Skrzypek M.S."/>
            <person name="Miyasato S.R."/>
            <person name="Simison M."/>
            <person name="Cherry J.M."/>
        </authorList>
    </citation>
    <scope>GENOME REANNOTATION</scope>
    <source>
        <strain>ATCC 204508 / S288c</strain>
    </source>
</reference>
<reference key="3">
    <citation type="journal article" date="2007" name="Genome Res.">
        <title>Approaching a complete repository of sequence-verified protein-encoding clones for Saccharomyces cerevisiae.</title>
        <authorList>
            <person name="Hu Y."/>
            <person name="Rolfs A."/>
            <person name="Bhullar B."/>
            <person name="Murthy T.V.S."/>
            <person name="Zhu C."/>
            <person name="Berger M.F."/>
            <person name="Camargo A.A."/>
            <person name="Kelley F."/>
            <person name="McCarron S."/>
            <person name="Jepson D."/>
            <person name="Richardson A."/>
            <person name="Raphael J."/>
            <person name="Moreira D."/>
            <person name="Taycher E."/>
            <person name="Zuo D."/>
            <person name="Mohr S."/>
            <person name="Kane M.F."/>
            <person name="Williamson J."/>
            <person name="Simpson A.J.G."/>
            <person name="Bulyk M.L."/>
            <person name="Harlow E."/>
            <person name="Marsischky G."/>
            <person name="Kolodner R.D."/>
            <person name="LaBaer J."/>
        </authorList>
    </citation>
    <scope>NUCLEOTIDE SEQUENCE [GENOMIC DNA]</scope>
    <source>
        <strain>ATCC 204508 / S288c</strain>
    </source>
</reference>
<reference key="4">
    <citation type="journal article" date="1997" name="Trends Biochem. Sci.">
        <title>The protein kinases of budding yeast: six score and more.</title>
        <authorList>
            <person name="Hunter T."/>
            <person name="Plowman G.D."/>
        </authorList>
    </citation>
    <scope>PREDICTION OF FUNCTION</scope>
</reference>
<reference key="5">
    <citation type="journal article" date="1999" name="Proc. Natl. Acad. Sci. U.S.A.">
        <title>Global response of Saccharomyces cerevisiae to an alkylating agent.</title>
        <authorList>
            <person name="Jelinsky S.A."/>
            <person name="Samson L.D."/>
        </authorList>
    </citation>
    <scope>INDUCTION</scope>
</reference>
<reference key="6">
    <citation type="journal article" date="2003" name="Nature">
        <title>Global analysis of protein expression in yeast.</title>
        <authorList>
            <person name="Ghaemmaghami S."/>
            <person name="Huh W.-K."/>
            <person name="Bower K."/>
            <person name="Howson R.W."/>
            <person name="Belle A."/>
            <person name="Dephoure N."/>
            <person name="O'Shea E.K."/>
            <person name="Weissman J.S."/>
        </authorList>
    </citation>
    <scope>LEVEL OF PROTEIN EXPRESSION [LARGE SCALE ANALYSIS]</scope>
</reference>
<reference key="7">
    <citation type="journal article" date="2008" name="Mol. Cell. Proteomics">
        <title>A multidimensional chromatography technology for in-depth phosphoproteome analysis.</title>
        <authorList>
            <person name="Albuquerque C.P."/>
            <person name="Smolka M.B."/>
            <person name="Payne S.H."/>
            <person name="Bafna V."/>
            <person name="Eng J."/>
            <person name="Zhou H."/>
        </authorList>
    </citation>
    <scope>PHOSPHORYLATION [LARGE SCALE ANALYSIS] AT THR-58; SER-60 AND SER-216</scope>
    <scope>IDENTIFICATION BY MASS SPECTROMETRY [LARGE SCALE ANALYSIS]</scope>
</reference>
<reference key="8">
    <citation type="journal article" date="2009" name="Science">
        <title>Global analysis of Cdk1 substrate phosphorylation sites provides insights into evolution.</title>
        <authorList>
            <person name="Holt L.J."/>
            <person name="Tuch B.B."/>
            <person name="Villen J."/>
            <person name="Johnson A.D."/>
            <person name="Gygi S.P."/>
            <person name="Morgan D.O."/>
        </authorList>
    </citation>
    <scope>IDENTIFICATION BY MASS SPECTROMETRY [LARGE SCALE ANALYSIS]</scope>
</reference>
<reference key="9">
    <citation type="journal article" date="2010" name="Science">
        <title>A global protein kinase and phosphatase interaction network in yeast.</title>
        <authorList>
            <person name="Breitkreutz A."/>
            <person name="Choi H."/>
            <person name="Sharom J.R."/>
            <person name="Boucher L."/>
            <person name="Neduva V."/>
            <person name="Larsen B."/>
            <person name="Lin Z.Y."/>
            <person name="Breitkreutz B.J."/>
            <person name="Stark C."/>
            <person name="Liu G."/>
            <person name="Ahn J."/>
            <person name="Dewar-Darch D."/>
            <person name="Reguly T."/>
            <person name="Tang X."/>
            <person name="Almeida R."/>
            <person name="Qin Z.S."/>
            <person name="Pawson T."/>
            <person name="Gingras A.C."/>
            <person name="Nesvizhskii A.I."/>
            <person name="Tyers M."/>
        </authorList>
    </citation>
    <scope>INTERACTION WITH ARC1; CKA2 AND GUS1</scope>
</reference>
<reference key="10">
    <citation type="journal article" date="2012" name="Proteomics">
        <title>Sites of ubiquitin attachment in Saccharomyces cerevisiae.</title>
        <authorList>
            <person name="Starita L.M."/>
            <person name="Lo R.S."/>
            <person name="Eng J.K."/>
            <person name="von Haller P.D."/>
            <person name="Fields S."/>
        </authorList>
    </citation>
    <scope>UBIQUITINATION [LARGE SCALE ANALYSIS] AT LYS-334</scope>
    <scope>IDENTIFICATION BY MASS SPECTROMETRY [LARGE SCALE ANALYSIS]</scope>
</reference>
<name>RTK1_YEAST</name>
<gene>
    <name type="primary">RTK1</name>
    <name type="ordered locus">YDL025C</name>
    <name type="ORF">D2810</name>
</gene>
<organism>
    <name type="scientific">Saccharomyces cerevisiae (strain ATCC 204508 / S288c)</name>
    <name type="common">Baker's yeast</name>
    <dbReference type="NCBI Taxonomy" id="559292"/>
    <lineage>
        <taxon>Eukaryota</taxon>
        <taxon>Fungi</taxon>
        <taxon>Dikarya</taxon>
        <taxon>Ascomycota</taxon>
        <taxon>Saccharomycotina</taxon>
        <taxon>Saccharomycetes</taxon>
        <taxon>Saccharomycetales</taxon>
        <taxon>Saccharomycetaceae</taxon>
        <taxon>Saccharomyces</taxon>
    </lineage>
</organism>
<evidence type="ECO:0000255" key="1">
    <source>
        <dbReference type="PROSITE-ProRule" id="PRU00159"/>
    </source>
</evidence>
<evidence type="ECO:0000255" key="2">
    <source>
        <dbReference type="PROSITE-ProRule" id="PRU10027"/>
    </source>
</evidence>
<evidence type="ECO:0000256" key="3">
    <source>
        <dbReference type="SAM" id="MobiDB-lite"/>
    </source>
</evidence>
<evidence type="ECO:0000269" key="4">
    <source>
    </source>
</evidence>
<evidence type="ECO:0000269" key="5">
    <source>
    </source>
</evidence>
<evidence type="ECO:0000269" key="6">
    <source>
    </source>
</evidence>
<evidence type="ECO:0007744" key="7">
    <source>
    </source>
</evidence>
<evidence type="ECO:0007744" key="8">
    <source>
    </source>
</evidence>
<comment type="function">
    <text>Probable serine/threonine-protein kinase that may be involved in ribosome biogenesis.</text>
</comment>
<comment type="catalytic activity">
    <reaction>
        <text>L-seryl-[protein] + ATP = O-phospho-L-seryl-[protein] + ADP + H(+)</text>
        <dbReference type="Rhea" id="RHEA:17989"/>
        <dbReference type="Rhea" id="RHEA-COMP:9863"/>
        <dbReference type="Rhea" id="RHEA-COMP:11604"/>
        <dbReference type="ChEBI" id="CHEBI:15378"/>
        <dbReference type="ChEBI" id="CHEBI:29999"/>
        <dbReference type="ChEBI" id="CHEBI:30616"/>
        <dbReference type="ChEBI" id="CHEBI:83421"/>
        <dbReference type="ChEBI" id="CHEBI:456216"/>
        <dbReference type="EC" id="2.7.11.1"/>
    </reaction>
</comment>
<comment type="catalytic activity">
    <reaction>
        <text>L-threonyl-[protein] + ATP = O-phospho-L-threonyl-[protein] + ADP + H(+)</text>
        <dbReference type="Rhea" id="RHEA:46608"/>
        <dbReference type="Rhea" id="RHEA-COMP:11060"/>
        <dbReference type="Rhea" id="RHEA-COMP:11605"/>
        <dbReference type="ChEBI" id="CHEBI:15378"/>
        <dbReference type="ChEBI" id="CHEBI:30013"/>
        <dbReference type="ChEBI" id="CHEBI:30616"/>
        <dbReference type="ChEBI" id="CHEBI:61977"/>
        <dbReference type="ChEBI" id="CHEBI:456216"/>
        <dbReference type="EC" id="2.7.11.1"/>
    </reaction>
</comment>
<comment type="subunit">
    <text evidence="5">Interacts with ribosome biogenesis factors ARC1, CKA2 and GUS1.</text>
</comment>
<comment type="induction">
    <text evidence="6">By the alkylating agent methyl methanesulfonate (MMS).</text>
</comment>
<comment type="miscellaneous">
    <text evidence="4">Present with 861 molecules/cell in log phase SD medium.</text>
</comment>
<comment type="similarity">
    <text evidence="1">Belongs to the protein kinase superfamily. Ser/Thr protein kinase family.</text>
</comment>
<sequence length="620" mass="69615">MVKETPLHSSSSTSLSSLFRPTKLKNLSAKIFNGGGNQSYSKTDDVSRSSSRSSKKNTDSDQEDQIKYNKPNDRRSTIGKSPQGNGALSKESHVVASSTLTGISPTSAKKAPIDYSPSRPLPNNHNPVRTGHTVPHLPHSIHNPINYIHQGSKDAFHHPHPVRSTAHSNISTVSSAKSDTPSSNLSYQAHMHPVEILQKQIEDKHFMDSQASTPGSVELQHNSSSGSDDTSSRKKKSLRLTRFFKKIHNDYHDNHHHHHHHNRGSTPTKPKLNLNTNENIVESNGKALYETDNPVELLEKYGIPGRKLGEGASGSVSVVERTDGKLFACKMFRKPHLNNEGTNQSQLANYSKKVTTEFCIGSTLHHENIVETLDMLTEGDTYLLVMEYAPYDFFNLVMSNLMTQDEVNCYFKQLCHGVNYLHSMGLAHRDLKLDNCVVTKDGILKLIDFGSAVVFQYPYEDTIVKSHGIVGSDPYLAPELLKQTSYDPRVADVWSIAIIFYCMVLKRFPWKAPKKSFNSFRLFTEEPEDEDDIVRGPNKILRLLPRHSRTIIGRMLALEPKQRVLMNDVVKDDWLVSVPSCEVDPTSGDLVEKPKNHKHHLVTEEELNELTKQHGNKDSN</sequence>
<protein>
    <recommendedName>
        <fullName>Probable serine/threonine-protein kinase RTK1</fullName>
        <ecNumber>2.7.11.1</ecNumber>
    </recommendedName>
    <alternativeName>
        <fullName>Ribosome biogenesis and tRNA synthetase-associated kinase 1</fullName>
    </alternativeName>
</protein>
<keyword id="KW-0067">ATP-binding</keyword>
<keyword id="KW-1017">Isopeptide bond</keyword>
<keyword id="KW-0418">Kinase</keyword>
<keyword id="KW-0547">Nucleotide-binding</keyword>
<keyword id="KW-0597">Phosphoprotein</keyword>
<keyword id="KW-1185">Reference proteome</keyword>
<keyword id="KW-0723">Serine/threonine-protein kinase</keyword>
<keyword id="KW-0808">Transferase</keyword>
<keyword id="KW-0832">Ubl conjugation</keyword>